<sequence length="90" mass="10090">MALDSAKKAEIVAKFARKSGDTGSPEVQVALLTTRISELTGHLKINKKDFSSRLGLLKLVGRRKRLLKYLKAKNYESYTKLIAELGIRDK</sequence>
<feature type="chain" id="PRO_1000054769" description="Small ribosomal subunit protein uS15">
    <location>
        <begin position="1"/>
        <end position="90"/>
    </location>
</feature>
<comment type="function">
    <text evidence="1">One of the primary rRNA binding proteins, it binds directly to 16S rRNA where it helps nucleate assembly of the platform of the 30S subunit by binding and bridging several RNA helices of the 16S rRNA.</text>
</comment>
<comment type="function">
    <text evidence="1">Forms an intersubunit bridge (bridge B4) with the 23S rRNA of the 50S subunit in the ribosome.</text>
</comment>
<comment type="subunit">
    <text evidence="1">Part of the 30S ribosomal subunit. Forms a bridge to the 50S subunit in the 70S ribosome, contacting the 23S rRNA.</text>
</comment>
<comment type="similarity">
    <text evidence="1">Belongs to the universal ribosomal protein uS15 family.</text>
</comment>
<name>RS15_CAMFF</name>
<protein>
    <recommendedName>
        <fullName evidence="1">Small ribosomal subunit protein uS15</fullName>
    </recommendedName>
    <alternativeName>
        <fullName evidence="2">30S ribosomal protein S15</fullName>
    </alternativeName>
</protein>
<evidence type="ECO:0000255" key="1">
    <source>
        <dbReference type="HAMAP-Rule" id="MF_01343"/>
    </source>
</evidence>
<evidence type="ECO:0000305" key="2"/>
<reference key="1">
    <citation type="submission" date="2006-11" db="EMBL/GenBank/DDBJ databases">
        <title>Sequence of Campylobacter fetus subsp. fetus 82-40.</title>
        <authorList>
            <person name="Fouts D.E."/>
            <person name="Nelson K.E."/>
        </authorList>
    </citation>
    <scope>NUCLEOTIDE SEQUENCE [LARGE SCALE GENOMIC DNA]</scope>
    <source>
        <strain>82-40</strain>
    </source>
</reference>
<accession>A0RPX5</accession>
<dbReference type="EMBL" id="CP000487">
    <property type="protein sequence ID" value="ABK82176.1"/>
    <property type="molecule type" value="Genomic_DNA"/>
</dbReference>
<dbReference type="RefSeq" id="WP_002849698.1">
    <property type="nucleotide sequence ID" value="NC_008599.1"/>
</dbReference>
<dbReference type="SMR" id="A0RPX5"/>
<dbReference type="GeneID" id="61064924"/>
<dbReference type="KEGG" id="cff:CFF8240_1097"/>
<dbReference type="eggNOG" id="COG0184">
    <property type="taxonomic scope" value="Bacteria"/>
</dbReference>
<dbReference type="HOGENOM" id="CLU_148518_0_0_7"/>
<dbReference type="Proteomes" id="UP000000760">
    <property type="component" value="Chromosome"/>
</dbReference>
<dbReference type="GO" id="GO:0022627">
    <property type="term" value="C:cytosolic small ribosomal subunit"/>
    <property type="evidence" value="ECO:0007669"/>
    <property type="project" value="TreeGrafter"/>
</dbReference>
<dbReference type="GO" id="GO:0019843">
    <property type="term" value="F:rRNA binding"/>
    <property type="evidence" value="ECO:0007669"/>
    <property type="project" value="UniProtKB-UniRule"/>
</dbReference>
<dbReference type="GO" id="GO:0003735">
    <property type="term" value="F:structural constituent of ribosome"/>
    <property type="evidence" value="ECO:0007669"/>
    <property type="project" value="InterPro"/>
</dbReference>
<dbReference type="GO" id="GO:0006412">
    <property type="term" value="P:translation"/>
    <property type="evidence" value="ECO:0007669"/>
    <property type="project" value="UniProtKB-UniRule"/>
</dbReference>
<dbReference type="CDD" id="cd00353">
    <property type="entry name" value="Ribosomal_S15p_S13e"/>
    <property type="match status" value="1"/>
</dbReference>
<dbReference type="FunFam" id="1.10.287.10:FF:000002">
    <property type="entry name" value="30S ribosomal protein S15"/>
    <property type="match status" value="1"/>
</dbReference>
<dbReference type="Gene3D" id="6.10.250.3130">
    <property type="match status" value="1"/>
</dbReference>
<dbReference type="Gene3D" id="1.10.287.10">
    <property type="entry name" value="S15/NS1, RNA-binding"/>
    <property type="match status" value="1"/>
</dbReference>
<dbReference type="HAMAP" id="MF_01343_B">
    <property type="entry name" value="Ribosomal_uS15_B"/>
    <property type="match status" value="1"/>
</dbReference>
<dbReference type="InterPro" id="IPR000589">
    <property type="entry name" value="Ribosomal_uS15"/>
</dbReference>
<dbReference type="InterPro" id="IPR005290">
    <property type="entry name" value="Ribosomal_uS15_bac-type"/>
</dbReference>
<dbReference type="InterPro" id="IPR009068">
    <property type="entry name" value="uS15_NS1_RNA-bd_sf"/>
</dbReference>
<dbReference type="NCBIfam" id="TIGR00952">
    <property type="entry name" value="S15_bact"/>
    <property type="match status" value="1"/>
</dbReference>
<dbReference type="PANTHER" id="PTHR23321">
    <property type="entry name" value="RIBOSOMAL PROTEIN S15, BACTERIAL AND ORGANELLAR"/>
    <property type="match status" value="1"/>
</dbReference>
<dbReference type="PANTHER" id="PTHR23321:SF26">
    <property type="entry name" value="SMALL RIBOSOMAL SUBUNIT PROTEIN US15M"/>
    <property type="match status" value="1"/>
</dbReference>
<dbReference type="Pfam" id="PF00312">
    <property type="entry name" value="Ribosomal_S15"/>
    <property type="match status" value="1"/>
</dbReference>
<dbReference type="SMART" id="SM01387">
    <property type="entry name" value="Ribosomal_S15"/>
    <property type="match status" value="1"/>
</dbReference>
<dbReference type="SUPFAM" id="SSF47060">
    <property type="entry name" value="S15/NS1 RNA-binding domain"/>
    <property type="match status" value="1"/>
</dbReference>
<dbReference type="PROSITE" id="PS00362">
    <property type="entry name" value="RIBOSOMAL_S15"/>
    <property type="match status" value="1"/>
</dbReference>
<organism>
    <name type="scientific">Campylobacter fetus subsp. fetus (strain 82-40)</name>
    <dbReference type="NCBI Taxonomy" id="360106"/>
    <lineage>
        <taxon>Bacteria</taxon>
        <taxon>Pseudomonadati</taxon>
        <taxon>Campylobacterota</taxon>
        <taxon>Epsilonproteobacteria</taxon>
        <taxon>Campylobacterales</taxon>
        <taxon>Campylobacteraceae</taxon>
        <taxon>Campylobacter</taxon>
    </lineage>
</organism>
<gene>
    <name evidence="1" type="primary">rpsO</name>
    <name type="ordered locus">CFF8240_1097</name>
</gene>
<proteinExistence type="inferred from homology"/>
<keyword id="KW-0687">Ribonucleoprotein</keyword>
<keyword id="KW-0689">Ribosomal protein</keyword>
<keyword id="KW-0694">RNA-binding</keyword>
<keyword id="KW-0699">rRNA-binding</keyword>